<accession>B4II58</accession>
<feature type="signal peptide" evidence="3">
    <location>
        <begin position="1"/>
        <end position="21"/>
    </location>
</feature>
<feature type="chain" id="PRO_0000355138" description="Protein Turandot A1/2">
    <location>
        <begin position="22"/>
        <end position="129"/>
    </location>
</feature>
<feature type="glycosylation site" description="N-linked (GlcNAc...) asparagine" evidence="3">
    <location>
        <position position="49"/>
    </location>
</feature>
<protein>
    <recommendedName>
        <fullName>Protein Turandot A1/2</fullName>
    </recommendedName>
</protein>
<dbReference type="EMBL" id="CH480842">
    <property type="protein sequence ID" value="EDW49602.1"/>
    <property type="molecule type" value="Genomic_DNA"/>
</dbReference>
<dbReference type="EMBL" id="CH480842">
    <property type="protein sequence ID" value="EDW49603.1"/>
    <property type="molecule type" value="Genomic_DNA"/>
</dbReference>
<dbReference type="SMR" id="B4II58"/>
<dbReference type="STRING" id="7238.B4II58"/>
<dbReference type="GlyCosmos" id="B4II58">
    <property type="glycosylation" value="1 site, No reported glycans"/>
</dbReference>
<dbReference type="EnsemblMetazoa" id="FBtr0206127">
    <property type="protein sequence ID" value="FBpp0204619"/>
    <property type="gene ID" value="FBgn0178010"/>
</dbReference>
<dbReference type="EnsemblMetazoa" id="FBtr0206128">
    <property type="protein sequence ID" value="FBpp0204620"/>
    <property type="gene ID" value="FBgn0178011"/>
</dbReference>
<dbReference type="EnsemblMetazoa" id="XM_002043382.2">
    <property type="protein sequence ID" value="XP_002043418.1"/>
    <property type="gene ID" value="LOC6619197"/>
</dbReference>
<dbReference type="EnsemblMetazoa" id="XM_002043383.2">
    <property type="protein sequence ID" value="XP_002043419.1"/>
    <property type="gene ID" value="LOC6619198"/>
</dbReference>
<dbReference type="GeneID" id="6619197"/>
<dbReference type="GeneID" id="6619198"/>
<dbReference type="KEGG" id="dse:6619197"/>
<dbReference type="KEGG" id="dse:6619198"/>
<dbReference type="HOGENOM" id="CLU_152780_0_0_1"/>
<dbReference type="OMA" id="CCAYSDA"/>
<dbReference type="OrthoDB" id="60450at7215"/>
<dbReference type="PhylomeDB" id="B4II58"/>
<dbReference type="Proteomes" id="UP000001292">
    <property type="component" value="Unassembled WGS sequence"/>
</dbReference>
<dbReference type="GO" id="GO:0005615">
    <property type="term" value="C:extracellular space"/>
    <property type="evidence" value="ECO:0000250"/>
    <property type="project" value="UniProtKB"/>
</dbReference>
<dbReference type="GO" id="GO:0034605">
    <property type="term" value="P:cellular response to heat"/>
    <property type="evidence" value="ECO:0007669"/>
    <property type="project" value="UniProtKB-ARBA"/>
</dbReference>
<dbReference type="GO" id="GO:0042742">
    <property type="term" value="P:defense response to bacterium"/>
    <property type="evidence" value="ECO:0007669"/>
    <property type="project" value="UniProtKB-KW"/>
</dbReference>
<dbReference type="GO" id="GO:0045087">
    <property type="term" value="P:innate immune response"/>
    <property type="evidence" value="ECO:0007669"/>
    <property type="project" value="UniProtKB-KW"/>
</dbReference>
<dbReference type="GO" id="GO:0009617">
    <property type="term" value="P:response to bacterium"/>
    <property type="evidence" value="ECO:0000250"/>
    <property type="project" value="UniProtKB"/>
</dbReference>
<dbReference type="GO" id="GO:0009409">
    <property type="term" value="P:response to cold"/>
    <property type="evidence" value="ECO:0000250"/>
    <property type="project" value="UniProtKB"/>
</dbReference>
<dbReference type="GO" id="GO:0009408">
    <property type="term" value="P:response to heat"/>
    <property type="evidence" value="ECO:0000250"/>
    <property type="project" value="UniProtKB"/>
</dbReference>
<dbReference type="GO" id="GO:0009612">
    <property type="term" value="P:response to mechanical stimulus"/>
    <property type="evidence" value="ECO:0000250"/>
    <property type="project" value="UniProtKB"/>
</dbReference>
<dbReference type="GO" id="GO:0006979">
    <property type="term" value="P:response to oxidative stress"/>
    <property type="evidence" value="ECO:0000250"/>
    <property type="project" value="UniProtKB"/>
</dbReference>
<dbReference type="GO" id="GO:0009411">
    <property type="term" value="P:response to UV"/>
    <property type="evidence" value="ECO:0000250"/>
    <property type="project" value="UniProtKB"/>
</dbReference>
<dbReference type="GO" id="GO:0009414">
    <property type="term" value="P:response to water deprivation"/>
    <property type="evidence" value="ECO:0000250"/>
    <property type="project" value="UniProtKB"/>
</dbReference>
<dbReference type="InterPro" id="IPR010825">
    <property type="entry name" value="Turandot"/>
</dbReference>
<dbReference type="Pfam" id="PF07240">
    <property type="entry name" value="Turandot"/>
    <property type="match status" value="1"/>
</dbReference>
<proteinExistence type="inferred from homology"/>
<organism>
    <name type="scientific">Drosophila sechellia</name>
    <name type="common">Fruit fly</name>
    <dbReference type="NCBI Taxonomy" id="7238"/>
    <lineage>
        <taxon>Eukaryota</taxon>
        <taxon>Metazoa</taxon>
        <taxon>Ecdysozoa</taxon>
        <taxon>Arthropoda</taxon>
        <taxon>Hexapoda</taxon>
        <taxon>Insecta</taxon>
        <taxon>Pterygota</taxon>
        <taxon>Neoptera</taxon>
        <taxon>Endopterygota</taxon>
        <taxon>Diptera</taxon>
        <taxon>Brachycera</taxon>
        <taxon>Muscomorpha</taxon>
        <taxon>Ephydroidea</taxon>
        <taxon>Drosophilidae</taxon>
        <taxon>Drosophila</taxon>
        <taxon>Sophophora</taxon>
    </lineage>
</organism>
<sequence length="129" mass="14203">MNSSTALMCFALLLISPLCLGYSDEDREADSRRIAEIIQNAQDDDSKINSTQELLDIYRRLYPTLSLEDRENIDKFVNEHTDAIVIDGVPIQGGRKAKIIGKIVSPAAKGLAVGFFEELGSKIAQLFTG</sequence>
<reference evidence="4 5" key="1">
    <citation type="journal article" date="2007" name="Nature">
        <title>Evolution of genes and genomes on the Drosophila phylogeny.</title>
        <authorList>
            <consortium name="Drosophila 12 genomes consortium"/>
        </authorList>
    </citation>
    <scope>NUCLEOTIDE SEQUENCE [LARGE SCALE GENOMIC DNA] (TOTA1 AND TOTA2)</scope>
    <source>
        <strain evidence="5">Rob3c / Tucson 14021-0248.25</strain>
    </source>
</reference>
<name>TOTA_DROSE</name>
<keyword id="KW-0044">Antibiotic</keyword>
<keyword id="KW-0929">Antimicrobial</keyword>
<keyword id="KW-0325">Glycoprotein</keyword>
<keyword id="KW-0391">Immunity</keyword>
<keyword id="KW-0399">Innate immunity</keyword>
<keyword id="KW-1185">Reference proteome</keyword>
<keyword id="KW-0964">Secreted</keyword>
<keyword id="KW-0732">Signal</keyword>
<comment type="function">
    <text evidence="2">A humoral factor that plays a role in stress tolerance; gives increased resistance to the lethal effects of bacterial challenge and stress. Regulated by the JAK/STAT pathway and NF-KB-like Relish pathway in the fat body, upd3 in the hemocytes and Mekk1 in response to septic injury and consequent immune response (By similarity).</text>
</comment>
<comment type="subcellular location">
    <subcellularLocation>
        <location evidence="2">Secreted</location>
    </subcellularLocation>
    <text evidence="1">Secreted from the fat body into the hemolymph.</text>
</comment>
<comment type="similarity">
    <text evidence="4">Belongs to the Turandot family.</text>
</comment>
<gene>
    <name type="primary">TotA1</name>
    <name type="ORF">GM23142</name>
</gene>
<gene>
    <name type="primary">TotA2</name>
    <name type="ORF">GM23143</name>
</gene>
<evidence type="ECO:0000250" key="1"/>
<evidence type="ECO:0000250" key="2">
    <source>
        <dbReference type="UniProtKB" id="Q8IN44"/>
    </source>
</evidence>
<evidence type="ECO:0000255" key="3"/>
<evidence type="ECO:0000305" key="4"/>
<evidence type="ECO:0000312" key="5">
    <source>
        <dbReference type="EMBL" id="EDW49602.1"/>
    </source>
</evidence>